<proteinExistence type="inferred from homology"/>
<accession>Q4WI88</accession>
<keyword id="KW-0143">Chaperone</keyword>
<keyword id="KW-0472">Membrane</keyword>
<keyword id="KW-0496">Mitochondrion</keyword>
<keyword id="KW-0999">Mitochondrion inner membrane</keyword>
<keyword id="KW-0653">Protein transport</keyword>
<keyword id="KW-1185">Reference proteome</keyword>
<keyword id="KW-0811">Translocation</keyword>
<keyword id="KW-0812">Transmembrane</keyword>
<keyword id="KW-1133">Transmembrane helix</keyword>
<keyword id="KW-0813">Transport</keyword>
<organism>
    <name type="scientific">Aspergillus fumigatus (strain ATCC MYA-4609 / CBS 101355 / FGSC A1100 / Af293)</name>
    <name type="common">Neosartorya fumigata</name>
    <dbReference type="NCBI Taxonomy" id="330879"/>
    <lineage>
        <taxon>Eukaryota</taxon>
        <taxon>Fungi</taxon>
        <taxon>Dikarya</taxon>
        <taxon>Ascomycota</taxon>
        <taxon>Pezizomycotina</taxon>
        <taxon>Eurotiomycetes</taxon>
        <taxon>Eurotiomycetidae</taxon>
        <taxon>Eurotiales</taxon>
        <taxon>Aspergillaceae</taxon>
        <taxon>Aspergillus</taxon>
        <taxon>Aspergillus subgen. Fumigati</taxon>
    </lineage>
</organism>
<comment type="function">
    <text evidence="1">Essential component of the PAM complex, a complex required for the translocation of transit peptide-containing proteins from the inner membrane into the mitochondrial matrix in an ATP-dependent manner. In the complex, it is required to stimulate activity of mtHSP70 (SSC1/sscA) (By similarity).</text>
</comment>
<comment type="subunit">
    <text evidence="1">Heterodimer with PAM18/pamR. Component of the PAM complex, at least composed of mtHsp70, MGE1/mgeA, tim44, PAM16/pamP, PAM17/pamQ and PAM18/pamR (By similarity).</text>
</comment>
<comment type="subcellular location">
    <subcellularLocation>
        <location evidence="1">Mitochondrion inner membrane</location>
        <topology evidence="1">Single-pass membrane protein</topology>
    </subcellularLocation>
</comment>
<comment type="domain">
    <text evidence="1">The J domain is essential for co-chaperone activity and mediates the heterodimerization with the J-like domain of PAM16.</text>
</comment>
<comment type="similarity">
    <text evidence="3">Belongs to the TIM14 family.</text>
</comment>
<dbReference type="EMBL" id="AAHF01000008">
    <property type="protein sequence ID" value="EAL87367.1"/>
    <property type="molecule type" value="Genomic_DNA"/>
</dbReference>
<dbReference type="RefSeq" id="XP_749405.1">
    <property type="nucleotide sequence ID" value="XM_744312.1"/>
</dbReference>
<dbReference type="SMR" id="Q4WI88"/>
<dbReference type="FunCoup" id="Q4WI88">
    <property type="interactions" value="28"/>
</dbReference>
<dbReference type="STRING" id="330879.Q4WI88"/>
<dbReference type="EnsemblFungi" id="EAL87367">
    <property type="protein sequence ID" value="EAL87367"/>
    <property type="gene ID" value="AFUA_2G02700"/>
</dbReference>
<dbReference type="GeneID" id="3506651"/>
<dbReference type="KEGG" id="afm:AFUA_2G02700"/>
<dbReference type="VEuPathDB" id="FungiDB:Afu2g02700"/>
<dbReference type="eggNOG" id="KOG0723">
    <property type="taxonomic scope" value="Eukaryota"/>
</dbReference>
<dbReference type="HOGENOM" id="CLU_017633_13_3_1"/>
<dbReference type="InParanoid" id="Q4WI88"/>
<dbReference type="OMA" id="EPRMNKR"/>
<dbReference type="OrthoDB" id="240298at2759"/>
<dbReference type="Proteomes" id="UP000002530">
    <property type="component" value="Chromosome 2"/>
</dbReference>
<dbReference type="GO" id="GO:0001405">
    <property type="term" value="C:PAM complex, Tim23 associated import motor"/>
    <property type="evidence" value="ECO:0000318"/>
    <property type="project" value="GO_Central"/>
</dbReference>
<dbReference type="GO" id="GO:0001671">
    <property type="term" value="F:ATPase activator activity"/>
    <property type="evidence" value="ECO:0000318"/>
    <property type="project" value="GO_Central"/>
</dbReference>
<dbReference type="GO" id="GO:0030150">
    <property type="term" value="P:protein import into mitochondrial matrix"/>
    <property type="evidence" value="ECO:0000318"/>
    <property type="project" value="GO_Central"/>
</dbReference>
<dbReference type="CDD" id="cd06257">
    <property type="entry name" value="DnaJ"/>
    <property type="match status" value="1"/>
</dbReference>
<dbReference type="FunFam" id="1.10.287.110:FF:000001">
    <property type="entry name" value="Import inner membrane translocase subunit tim14"/>
    <property type="match status" value="1"/>
</dbReference>
<dbReference type="Gene3D" id="1.10.287.110">
    <property type="entry name" value="DnaJ domain"/>
    <property type="match status" value="1"/>
</dbReference>
<dbReference type="InterPro" id="IPR001623">
    <property type="entry name" value="DnaJ_domain"/>
</dbReference>
<dbReference type="InterPro" id="IPR036869">
    <property type="entry name" value="J_dom_sf"/>
</dbReference>
<dbReference type="PANTHER" id="PTHR12763">
    <property type="match status" value="1"/>
</dbReference>
<dbReference type="PANTHER" id="PTHR12763:SF28">
    <property type="entry name" value="GEO10507P1-RELATED"/>
    <property type="match status" value="1"/>
</dbReference>
<dbReference type="Pfam" id="PF03656">
    <property type="entry name" value="Pam16"/>
    <property type="match status" value="1"/>
</dbReference>
<dbReference type="SUPFAM" id="SSF46565">
    <property type="entry name" value="Chaperone J-domain"/>
    <property type="match status" value="1"/>
</dbReference>
<protein>
    <recommendedName>
        <fullName>Mitochondrial import inner membrane translocase subunit tim14</fullName>
    </recommendedName>
    <alternativeName>
        <fullName>Presequence translocated-associated motor subunit pam18</fullName>
    </alternativeName>
</protein>
<feature type="chain" id="PRO_0000071108" description="Mitochondrial import inner membrane translocase subunit tim14">
    <location>
        <begin position="1"/>
        <end position="105"/>
    </location>
</feature>
<feature type="topological domain" description="Mitochondrial intermembrane" evidence="2">
    <location>
        <begin position="1"/>
        <end position="3"/>
    </location>
</feature>
<feature type="transmembrane region" description="Helical" evidence="2">
    <location>
        <begin position="4"/>
        <end position="23"/>
    </location>
</feature>
<feature type="topological domain" description="Mitochondrial matrix" evidence="2">
    <location>
        <begin position="24"/>
        <end position="105"/>
    </location>
</feature>
<feature type="domain" description="J">
    <location>
        <begin position="52"/>
        <end position="105"/>
    </location>
</feature>
<sequence length="105" mass="11746">MASTFAIGLGVATAAFLGRAGYVALRRYQGGINAMGKAFYKGGFEPRMTRREAALILELPERTLNKEKVRKKHRQLMLLNHPDRGGSPYLATKINEAKEFLDKHI</sequence>
<gene>
    <name type="primary">pam18</name>
    <name type="synonym">tim14</name>
    <name type="ORF">AFUA_2G02700</name>
</gene>
<reference key="1">
    <citation type="journal article" date="2005" name="Nature">
        <title>Genomic sequence of the pathogenic and allergenic filamentous fungus Aspergillus fumigatus.</title>
        <authorList>
            <person name="Nierman W.C."/>
            <person name="Pain A."/>
            <person name="Anderson M.J."/>
            <person name="Wortman J.R."/>
            <person name="Kim H.S."/>
            <person name="Arroyo J."/>
            <person name="Berriman M."/>
            <person name="Abe K."/>
            <person name="Archer D.B."/>
            <person name="Bermejo C."/>
            <person name="Bennett J.W."/>
            <person name="Bowyer P."/>
            <person name="Chen D."/>
            <person name="Collins M."/>
            <person name="Coulsen R."/>
            <person name="Davies R."/>
            <person name="Dyer P.S."/>
            <person name="Farman M.L."/>
            <person name="Fedorova N."/>
            <person name="Fedorova N.D."/>
            <person name="Feldblyum T.V."/>
            <person name="Fischer R."/>
            <person name="Fosker N."/>
            <person name="Fraser A."/>
            <person name="Garcia J.L."/>
            <person name="Garcia M.J."/>
            <person name="Goble A."/>
            <person name="Goldman G.H."/>
            <person name="Gomi K."/>
            <person name="Griffith-Jones S."/>
            <person name="Gwilliam R."/>
            <person name="Haas B.J."/>
            <person name="Haas H."/>
            <person name="Harris D.E."/>
            <person name="Horiuchi H."/>
            <person name="Huang J."/>
            <person name="Humphray S."/>
            <person name="Jimenez J."/>
            <person name="Keller N."/>
            <person name="Khouri H."/>
            <person name="Kitamoto K."/>
            <person name="Kobayashi T."/>
            <person name="Konzack S."/>
            <person name="Kulkarni R."/>
            <person name="Kumagai T."/>
            <person name="Lafton A."/>
            <person name="Latge J.-P."/>
            <person name="Li W."/>
            <person name="Lord A."/>
            <person name="Lu C."/>
            <person name="Majoros W.H."/>
            <person name="May G.S."/>
            <person name="Miller B.L."/>
            <person name="Mohamoud Y."/>
            <person name="Molina M."/>
            <person name="Monod M."/>
            <person name="Mouyna I."/>
            <person name="Mulligan S."/>
            <person name="Murphy L.D."/>
            <person name="O'Neil S."/>
            <person name="Paulsen I."/>
            <person name="Penalva M.A."/>
            <person name="Pertea M."/>
            <person name="Price C."/>
            <person name="Pritchard B.L."/>
            <person name="Quail M.A."/>
            <person name="Rabbinowitsch E."/>
            <person name="Rawlins N."/>
            <person name="Rajandream M.A."/>
            <person name="Reichard U."/>
            <person name="Renauld H."/>
            <person name="Robson G.D."/>
            <person name="Rodriguez de Cordoba S."/>
            <person name="Rodriguez-Pena J.M."/>
            <person name="Ronning C.M."/>
            <person name="Rutter S."/>
            <person name="Salzberg S.L."/>
            <person name="Sanchez M."/>
            <person name="Sanchez-Ferrero J.C."/>
            <person name="Saunders D."/>
            <person name="Seeger K."/>
            <person name="Squares R."/>
            <person name="Squares S."/>
            <person name="Takeuchi M."/>
            <person name="Tekaia F."/>
            <person name="Turner G."/>
            <person name="Vazquez de Aldana C.R."/>
            <person name="Weidman J."/>
            <person name="White O."/>
            <person name="Woodward J.R."/>
            <person name="Yu J.-H."/>
            <person name="Fraser C.M."/>
            <person name="Galagan J.E."/>
            <person name="Asai K."/>
            <person name="Machida M."/>
            <person name="Hall N."/>
            <person name="Barrell B.G."/>
            <person name="Denning D.W."/>
        </authorList>
    </citation>
    <scope>NUCLEOTIDE SEQUENCE [LARGE SCALE GENOMIC DNA]</scope>
    <source>
        <strain>ATCC MYA-4609 / CBS 101355 / FGSC A1100 / Af293</strain>
    </source>
</reference>
<evidence type="ECO:0000250" key="1"/>
<evidence type="ECO:0000255" key="2"/>
<evidence type="ECO:0000305" key="3"/>
<name>TIM14_ASPFU</name>